<protein>
    <recommendedName>
        <fullName evidence="1">Ribulose bisphosphate carboxylase large chain</fullName>
        <shortName evidence="1">RuBisCO large subunit</shortName>
        <ecNumber evidence="1">4.1.1.39</ecNumber>
    </recommendedName>
</protein>
<proteinExistence type="inferred from homology"/>
<keyword id="KW-0113">Calvin cycle</keyword>
<keyword id="KW-0120">Carbon dioxide fixation</keyword>
<keyword id="KW-0150">Chloroplast</keyword>
<keyword id="KW-1015">Disulfide bond</keyword>
<keyword id="KW-0456">Lyase</keyword>
<keyword id="KW-0460">Magnesium</keyword>
<keyword id="KW-0479">Metal-binding</keyword>
<keyword id="KW-0488">Methylation</keyword>
<keyword id="KW-0503">Monooxygenase</keyword>
<keyword id="KW-0560">Oxidoreductase</keyword>
<keyword id="KW-0601">Photorespiration</keyword>
<keyword id="KW-0602">Photosynthesis</keyword>
<keyword id="KW-0934">Plastid</keyword>
<gene>
    <name evidence="1" type="primary">rbcL</name>
</gene>
<organism>
    <name type="scientific">Coleonema pulchellum</name>
    <name type="common">Confetti bush</name>
    <dbReference type="NCBI Taxonomy" id="23551"/>
    <lineage>
        <taxon>Eukaryota</taxon>
        <taxon>Viridiplantae</taxon>
        <taxon>Streptophyta</taxon>
        <taxon>Embryophyta</taxon>
        <taxon>Tracheophyta</taxon>
        <taxon>Spermatophyta</taxon>
        <taxon>Magnoliopsida</taxon>
        <taxon>eudicotyledons</taxon>
        <taxon>Gunneridae</taxon>
        <taxon>Pentapetalae</taxon>
        <taxon>rosids</taxon>
        <taxon>malvids</taxon>
        <taxon>Sapindales</taxon>
        <taxon>Rutaceae</taxon>
        <taxon>Zanthoxyloideae</taxon>
        <taxon>Coleonema</taxon>
    </lineage>
</organism>
<dbReference type="EC" id="4.1.1.39" evidence="1"/>
<dbReference type="EMBL" id="L12567">
    <property type="protein sequence ID" value="AAA33077.2"/>
    <property type="molecule type" value="Genomic_DNA"/>
</dbReference>
<dbReference type="SMR" id="Q07210"/>
<dbReference type="GO" id="GO:0009507">
    <property type="term" value="C:chloroplast"/>
    <property type="evidence" value="ECO:0007669"/>
    <property type="project" value="UniProtKB-SubCell"/>
</dbReference>
<dbReference type="GO" id="GO:0000287">
    <property type="term" value="F:magnesium ion binding"/>
    <property type="evidence" value="ECO:0007669"/>
    <property type="project" value="InterPro"/>
</dbReference>
<dbReference type="GO" id="GO:0004497">
    <property type="term" value="F:monooxygenase activity"/>
    <property type="evidence" value="ECO:0007669"/>
    <property type="project" value="UniProtKB-KW"/>
</dbReference>
<dbReference type="GO" id="GO:0016984">
    <property type="term" value="F:ribulose-bisphosphate carboxylase activity"/>
    <property type="evidence" value="ECO:0007669"/>
    <property type="project" value="UniProtKB-EC"/>
</dbReference>
<dbReference type="GO" id="GO:0009853">
    <property type="term" value="P:photorespiration"/>
    <property type="evidence" value="ECO:0007669"/>
    <property type="project" value="UniProtKB-KW"/>
</dbReference>
<dbReference type="GO" id="GO:0019253">
    <property type="term" value="P:reductive pentose-phosphate cycle"/>
    <property type="evidence" value="ECO:0007669"/>
    <property type="project" value="UniProtKB-KW"/>
</dbReference>
<dbReference type="CDD" id="cd08212">
    <property type="entry name" value="RuBisCO_large_I"/>
    <property type="match status" value="1"/>
</dbReference>
<dbReference type="FunFam" id="3.20.20.110:FF:000001">
    <property type="entry name" value="Ribulose bisphosphate carboxylase large chain"/>
    <property type="match status" value="1"/>
</dbReference>
<dbReference type="FunFam" id="3.30.70.150:FF:000001">
    <property type="entry name" value="Ribulose bisphosphate carboxylase large chain"/>
    <property type="match status" value="1"/>
</dbReference>
<dbReference type="Gene3D" id="3.20.20.110">
    <property type="entry name" value="Ribulose bisphosphate carboxylase, large subunit, C-terminal domain"/>
    <property type="match status" value="1"/>
</dbReference>
<dbReference type="Gene3D" id="3.30.70.150">
    <property type="entry name" value="RuBisCO large subunit, N-terminal domain"/>
    <property type="match status" value="1"/>
</dbReference>
<dbReference type="HAMAP" id="MF_01338">
    <property type="entry name" value="RuBisCO_L_type1"/>
    <property type="match status" value="1"/>
</dbReference>
<dbReference type="InterPro" id="IPR033966">
    <property type="entry name" value="RuBisCO"/>
</dbReference>
<dbReference type="InterPro" id="IPR020878">
    <property type="entry name" value="RuBisCo_large_chain_AS"/>
</dbReference>
<dbReference type="InterPro" id="IPR000685">
    <property type="entry name" value="RuBisCO_lsu_C"/>
</dbReference>
<dbReference type="InterPro" id="IPR036376">
    <property type="entry name" value="RuBisCO_lsu_C_sf"/>
</dbReference>
<dbReference type="InterPro" id="IPR017443">
    <property type="entry name" value="RuBisCO_lsu_fd_N"/>
</dbReference>
<dbReference type="InterPro" id="IPR036422">
    <property type="entry name" value="RuBisCO_lsu_N_sf"/>
</dbReference>
<dbReference type="InterPro" id="IPR020888">
    <property type="entry name" value="RuBisCO_lsuI"/>
</dbReference>
<dbReference type="NCBIfam" id="NF003252">
    <property type="entry name" value="PRK04208.1"/>
    <property type="match status" value="1"/>
</dbReference>
<dbReference type="PANTHER" id="PTHR42704">
    <property type="entry name" value="RIBULOSE BISPHOSPHATE CARBOXYLASE"/>
    <property type="match status" value="1"/>
</dbReference>
<dbReference type="PANTHER" id="PTHR42704:SF15">
    <property type="entry name" value="RIBULOSE BISPHOSPHATE CARBOXYLASE LARGE CHAIN"/>
    <property type="match status" value="1"/>
</dbReference>
<dbReference type="Pfam" id="PF00016">
    <property type="entry name" value="RuBisCO_large"/>
    <property type="match status" value="1"/>
</dbReference>
<dbReference type="Pfam" id="PF02788">
    <property type="entry name" value="RuBisCO_large_N"/>
    <property type="match status" value="1"/>
</dbReference>
<dbReference type="SFLD" id="SFLDG01052">
    <property type="entry name" value="RuBisCO"/>
    <property type="match status" value="1"/>
</dbReference>
<dbReference type="SFLD" id="SFLDS00014">
    <property type="entry name" value="RuBisCO"/>
    <property type="match status" value="1"/>
</dbReference>
<dbReference type="SFLD" id="SFLDG00301">
    <property type="entry name" value="RuBisCO-like_proteins"/>
    <property type="match status" value="1"/>
</dbReference>
<dbReference type="SUPFAM" id="SSF51649">
    <property type="entry name" value="RuBisCo, C-terminal domain"/>
    <property type="match status" value="1"/>
</dbReference>
<dbReference type="SUPFAM" id="SSF54966">
    <property type="entry name" value="RuBisCO, large subunit, small (N-terminal) domain"/>
    <property type="match status" value="1"/>
</dbReference>
<dbReference type="PROSITE" id="PS00157">
    <property type="entry name" value="RUBISCO_LARGE"/>
    <property type="match status" value="1"/>
</dbReference>
<feature type="chain" id="PRO_0000062414" description="Ribulose bisphosphate carboxylase large chain">
    <location>
        <begin position="1" status="less than"/>
        <end position="469"/>
    </location>
</feature>
<feature type="active site" description="Proton acceptor" evidence="1">
    <location>
        <position position="169"/>
    </location>
</feature>
<feature type="active site" description="Proton acceptor" evidence="1">
    <location>
        <position position="288"/>
    </location>
</feature>
<feature type="binding site" description="in homodimeric partner" evidence="1">
    <location>
        <position position="117"/>
    </location>
    <ligand>
        <name>substrate</name>
    </ligand>
</feature>
<feature type="binding site" evidence="1">
    <location>
        <position position="167"/>
    </location>
    <ligand>
        <name>substrate</name>
    </ligand>
</feature>
<feature type="binding site" evidence="1">
    <location>
        <position position="171"/>
    </location>
    <ligand>
        <name>substrate</name>
    </ligand>
</feature>
<feature type="binding site" description="via carbamate group" evidence="1">
    <location>
        <position position="195"/>
    </location>
    <ligand>
        <name>Mg(2+)</name>
        <dbReference type="ChEBI" id="CHEBI:18420"/>
    </ligand>
</feature>
<feature type="binding site" evidence="1">
    <location>
        <position position="197"/>
    </location>
    <ligand>
        <name>Mg(2+)</name>
        <dbReference type="ChEBI" id="CHEBI:18420"/>
    </ligand>
</feature>
<feature type="binding site" evidence="1">
    <location>
        <position position="198"/>
    </location>
    <ligand>
        <name>Mg(2+)</name>
        <dbReference type="ChEBI" id="CHEBI:18420"/>
    </ligand>
</feature>
<feature type="binding site" evidence="1">
    <location>
        <position position="289"/>
    </location>
    <ligand>
        <name>substrate</name>
    </ligand>
</feature>
<feature type="binding site" evidence="1">
    <location>
        <position position="321"/>
    </location>
    <ligand>
        <name>substrate</name>
    </ligand>
</feature>
<feature type="binding site" evidence="1">
    <location>
        <position position="373"/>
    </location>
    <ligand>
        <name>substrate</name>
    </ligand>
</feature>
<feature type="site" description="Transition state stabilizer" evidence="1">
    <location>
        <position position="328"/>
    </location>
</feature>
<feature type="modified residue" description="N6,N6,N6-trimethyllysine" evidence="1">
    <location>
        <position position="8"/>
    </location>
</feature>
<feature type="modified residue" description="N6-carboxylysine" evidence="1">
    <location>
        <position position="195"/>
    </location>
</feature>
<feature type="disulfide bond" description="Interchain; in linked form" evidence="1">
    <location>
        <position position="241"/>
    </location>
</feature>
<feature type="non-terminal residue">
    <location>
        <position position="1"/>
    </location>
</feature>
<geneLocation type="chloroplast"/>
<evidence type="ECO:0000255" key="1">
    <source>
        <dbReference type="HAMAP-Rule" id="MF_01338"/>
    </source>
</evidence>
<accession>Q07210</accession>
<accession>Q39564</accession>
<name>RBL_COLPU</name>
<reference key="1">
    <citation type="journal article" date="1992" name="Aust. Syst. Bot.">
        <title>Affinities of the Australian endemic Akaniaceae: new evidence from rbcL sequences.</title>
        <authorList>
            <person name="Gadek P.A."/>
            <person name="Quinn C.J."/>
            <person name="Rodman J.E."/>
            <person name="Karol K.G."/>
            <person name="Conti E."/>
            <person name="Price R.A."/>
            <person name="Fernando E.S."/>
        </authorList>
        <dbReference type="AGRICOLA" id="IND93029186"/>
    </citation>
    <scope>NUCLEOTIDE SEQUENCE [GENOMIC DNA]</scope>
</reference>
<sequence>TKASVGFKAGVKDYKLTYYTPDYVTKDTDILAAFRVTPQPGVPPEEAGAAVAAESSTGTWTTVWTDGLTSLDRYKGRCYNIEPVAGEEHQYICYVAYPLDLFEEGSVTNMFTSIVGNVFGFKALRALRLEDLRIPPAYSKTFQGPPHGIQVERDKLNKYGRPLLGCTIKPKLGLSAKNYGRAVYECLRGGLDFTKDDENVNSQPFMRWRDRFLFCAERIYKSQAETGEIKGHYLNATAGTCEEMIKRAVFARELGVPIVMHDYLTGGFTANTSLAHYCRDNGLLLHIHRAMHAVIDRQKNHGIHFRVLAKALRMSGGDHIHAGTVVGKLEGERDITLGFVDLLRDDFIEKDRSRGIYFTQDWVSLPGVLPVASGGIHVWHMPALTEIFGDDSVLQFGGGTLGHPWGNAPGAVANRVALEACVQARNEGRDLAREGNEIIREASKWSPELAAACEVWKAIKFEFPAMDTL</sequence>
<comment type="function">
    <text evidence="1">RuBisCO catalyzes two reactions: the carboxylation of D-ribulose 1,5-bisphosphate, the primary event in carbon dioxide fixation, as well as the oxidative fragmentation of the pentose substrate in the photorespiration process. Both reactions occur simultaneously and in competition at the same active site.</text>
</comment>
<comment type="catalytic activity">
    <reaction evidence="1">
        <text>2 (2R)-3-phosphoglycerate + 2 H(+) = D-ribulose 1,5-bisphosphate + CO2 + H2O</text>
        <dbReference type="Rhea" id="RHEA:23124"/>
        <dbReference type="ChEBI" id="CHEBI:15377"/>
        <dbReference type="ChEBI" id="CHEBI:15378"/>
        <dbReference type="ChEBI" id="CHEBI:16526"/>
        <dbReference type="ChEBI" id="CHEBI:57870"/>
        <dbReference type="ChEBI" id="CHEBI:58272"/>
        <dbReference type="EC" id="4.1.1.39"/>
    </reaction>
</comment>
<comment type="catalytic activity">
    <reaction evidence="1">
        <text>D-ribulose 1,5-bisphosphate + O2 = 2-phosphoglycolate + (2R)-3-phosphoglycerate + 2 H(+)</text>
        <dbReference type="Rhea" id="RHEA:36631"/>
        <dbReference type="ChEBI" id="CHEBI:15378"/>
        <dbReference type="ChEBI" id="CHEBI:15379"/>
        <dbReference type="ChEBI" id="CHEBI:57870"/>
        <dbReference type="ChEBI" id="CHEBI:58033"/>
        <dbReference type="ChEBI" id="CHEBI:58272"/>
    </reaction>
</comment>
<comment type="cofactor">
    <cofactor evidence="1">
        <name>Mg(2+)</name>
        <dbReference type="ChEBI" id="CHEBI:18420"/>
    </cofactor>
    <text evidence="1">Binds 1 Mg(2+) ion per subunit.</text>
</comment>
<comment type="subunit">
    <text evidence="1">Heterohexadecamer of 8 large chains and 8 small chains; disulfide-linked. The disulfide link is formed within the large subunit homodimers.</text>
</comment>
<comment type="subcellular location">
    <subcellularLocation>
        <location>Plastid</location>
        <location>Chloroplast</location>
    </subcellularLocation>
</comment>
<comment type="PTM">
    <text evidence="1">The disulfide bond which can form in the large chain dimeric partners within the hexadecamer appears to be associated with oxidative stress and protein turnover.</text>
</comment>
<comment type="miscellaneous">
    <text evidence="1">The basic functional RuBisCO is composed of a large chain homodimer in a 'head-to-tail' conformation. In form I RuBisCO this homodimer is arranged in a barrel-like tetramer with the small subunits forming a tetrameric 'cap' on each end of the 'barrel'.</text>
</comment>
<comment type="similarity">
    <text evidence="1">Belongs to the RuBisCO large chain family. Type I subfamily.</text>
</comment>